<accession>P38119</accession>
<name>DPDS_MYCLE</name>
<proteinExistence type="inferred from homology"/>
<dbReference type="EC" id="2.5.1.86"/>
<dbReference type="EC" id="2.5.1.87"/>
<dbReference type="EMBL" id="U00016">
    <property type="protein sequence ID" value="AAA17169.1"/>
    <property type="molecule type" value="Genomic_DNA"/>
</dbReference>
<dbReference type="EMBL" id="AL583919">
    <property type="protein sequence ID" value="CAC30142.1"/>
    <property type="molecule type" value="Genomic_DNA"/>
</dbReference>
<dbReference type="PIR" id="S72601">
    <property type="entry name" value="S72601"/>
</dbReference>
<dbReference type="RefSeq" id="NP_301525.1">
    <property type="nucleotide sequence ID" value="NC_002677.1"/>
</dbReference>
<dbReference type="RefSeq" id="WP_010907849.1">
    <property type="nucleotide sequence ID" value="NC_002677.1"/>
</dbReference>
<dbReference type="SMR" id="P38119"/>
<dbReference type="STRING" id="272631.gene:17574455"/>
<dbReference type="KEGG" id="mle:ML0634"/>
<dbReference type="PATRIC" id="fig|272631.5.peg.1124"/>
<dbReference type="Leproma" id="ML0634"/>
<dbReference type="eggNOG" id="COG0020">
    <property type="taxonomic scope" value="Bacteria"/>
</dbReference>
<dbReference type="HOGENOM" id="CLU_038505_1_2_11"/>
<dbReference type="OrthoDB" id="4191603at2"/>
<dbReference type="Proteomes" id="UP000000806">
    <property type="component" value="Chromosome"/>
</dbReference>
<dbReference type="GO" id="GO:0005829">
    <property type="term" value="C:cytosol"/>
    <property type="evidence" value="ECO:0007669"/>
    <property type="project" value="TreeGrafter"/>
</dbReference>
<dbReference type="GO" id="GO:0005886">
    <property type="term" value="C:plasma membrane"/>
    <property type="evidence" value="ECO:0007669"/>
    <property type="project" value="UniProtKB-SubCell"/>
</dbReference>
<dbReference type="GO" id="GO:0008834">
    <property type="term" value="F:ditrans,polycis-undecaprenyl-diphosphate synthase [(2E,6E)-farnesyl-diphosphate specific] activity"/>
    <property type="evidence" value="ECO:0007669"/>
    <property type="project" value="TreeGrafter"/>
</dbReference>
<dbReference type="GO" id="GO:0000287">
    <property type="term" value="F:magnesium ion binding"/>
    <property type="evidence" value="ECO:0007669"/>
    <property type="project" value="UniProtKB-UniRule"/>
</dbReference>
<dbReference type="GO" id="GO:0030145">
    <property type="term" value="F:manganese ion binding"/>
    <property type="evidence" value="ECO:0007669"/>
    <property type="project" value="TreeGrafter"/>
</dbReference>
<dbReference type="GO" id="GO:0033850">
    <property type="term" value="F:Z-farnesyl diphosphate synthase activity"/>
    <property type="evidence" value="ECO:0007669"/>
    <property type="project" value="TreeGrafter"/>
</dbReference>
<dbReference type="GO" id="GO:0016094">
    <property type="term" value="P:polyprenol biosynthetic process"/>
    <property type="evidence" value="ECO:0007669"/>
    <property type="project" value="TreeGrafter"/>
</dbReference>
<dbReference type="CDD" id="cd00475">
    <property type="entry name" value="Cis_IPPS"/>
    <property type="match status" value="1"/>
</dbReference>
<dbReference type="FunFam" id="3.40.1180.10:FF:000004">
    <property type="entry name" value="Isoprenyl transferase"/>
    <property type="match status" value="1"/>
</dbReference>
<dbReference type="Gene3D" id="3.40.1180.10">
    <property type="entry name" value="Decaprenyl diphosphate synthase-like"/>
    <property type="match status" value="1"/>
</dbReference>
<dbReference type="HAMAP" id="MF_01139">
    <property type="entry name" value="ISPT"/>
    <property type="match status" value="1"/>
</dbReference>
<dbReference type="InterPro" id="IPR001441">
    <property type="entry name" value="UPP_synth-like"/>
</dbReference>
<dbReference type="InterPro" id="IPR018520">
    <property type="entry name" value="UPP_synth-like_CS"/>
</dbReference>
<dbReference type="InterPro" id="IPR036424">
    <property type="entry name" value="UPP_synth-like_sf"/>
</dbReference>
<dbReference type="NCBIfam" id="NF011402">
    <property type="entry name" value="PRK14827.1"/>
    <property type="match status" value="1"/>
</dbReference>
<dbReference type="NCBIfam" id="NF011404">
    <property type="entry name" value="PRK14829.1"/>
    <property type="match status" value="1"/>
</dbReference>
<dbReference type="NCBIfam" id="TIGR00055">
    <property type="entry name" value="uppS"/>
    <property type="match status" value="1"/>
</dbReference>
<dbReference type="PANTHER" id="PTHR10291:SF0">
    <property type="entry name" value="DEHYDRODOLICHYL DIPHOSPHATE SYNTHASE 2"/>
    <property type="match status" value="1"/>
</dbReference>
<dbReference type="PANTHER" id="PTHR10291">
    <property type="entry name" value="DEHYDRODOLICHYL DIPHOSPHATE SYNTHASE FAMILY MEMBER"/>
    <property type="match status" value="1"/>
</dbReference>
<dbReference type="Pfam" id="PF01255">
    <property type="entry name" value="Prenyltransf"/>
    <property type="match status" value="1"/>
</dbReference>
<dbReference type="SUPFAM" id="SSF64005">
    <property type="entry name" value="Undecaprenyl diphosphate synthase"/>
    <property type="match status" value="1"/>
</dbReference>
<dbReference type="PROSITE" id="PS01066">
    <property type="entry name" value="UPP_SYNTHASE"/>
    <property type="match status" value="1"/>
</dbReference>
<organism>
    <name type="scientific">Mycobacterium leprae (strain TN)</name>
    <dbReference type="NCBI Taxonomy" id="272631"/>
    <lineage>
        <taxon>Bacteria</taxon>
        <taxon>Bacillati</taxon>
        <taxon>Actinomycetota</taxon>
        <taxon>Actinomycetes</taxon>
        <taxon>Mycobacteriales</taxon>
        <taxon>Mycobacteriaceae</taxon>
        <taxon>Mycobacterium</taxon>
    </lineage>
</organism>
<evidence type="ECO:0000250" key="1"/>
<evidence type="ECO:0000256" key="2">
    <source>
        <dbReference type="SAM" id="MobiDB-lite"/>
    </source>
</evidence>
<evidence type="ECO:0000305" key="3"/>
<keyword id="KW-1003">Cell membrane</keyword>
<keyword id="KW-0460">Magnesium</keyword>
<keyword id="KW-0472">Membrane</keyword>
<keyword id="KW-0479">Metal-binding</keyword>
<keyword id="KW-1185">Reference proteome</keyword>
<keyword id="KW-0808">Transferase</keyword>
<sequence length="296" mass="33891">MVRNERTLKSTDFPQLPPAPDDYPTFPDKSTWPVVFPMLPPSPDGGPRRPPQHTSKAVAPRLSAAQLPTHVAIVMDGNGRWANQRGLHRTEGHKMGEAVVIDVACGAIELGIKWLSLYAFSTENWKRSVEEVRFLMGFNRDVVRRRRENLKEMGVRIRWVGSRPRLWRSVINELAIAEHMTAGNDVITINYCVNYGGRTEIAEATREIARLAAAGRLNPERITESTITRHLQRPDIPDVDLFVRTSGEQRSSNFMLWQAAYTEYIFQDKLWPDYDRRDLWAACEEYASRNRRFGSA</sequence>
<feature type="chain" id="PRO_0000123639" description="Decaprenyl diphosphate synthase">
    <location>
        <begin position="1"/>
        <end position="296"/>
    </location>
</feature>
<feature type="region of interest" description="Disordered" evidence="2">
    <location>
        <begin position="1"/>
        <end position="58"/>
    </location>
</feature>
<feature type="active site" evidence="1">
    <location>
        <position position="76"/>
    </location>
</feature>
<feature type="active site" description="Proton acceptor" evidence="1">
    <location>
        <position position="124"/>
    </location>
</feature>
<feature type="binding site" evidence="1">
    <location>
        <position position="76"/>
    </location>
    <ligand>
        <name>Mg(2+)</name>
        <dbReference type="ChEBI" id="CHEBI:18420"/>
    </ligand>
</feature>
<feature type="binding site" evidence="1">
    <location>
        <begin position="77"/>
        <end position="80"/>
    </location>
    <ligand>
        <name>substrate</name>
    </ligand>
</feature>
<feature type="binding site" evidence="1">
    <location>
        <position position="81"/>
    </location>
    <ligand>
        <name>substrate</name>
    </ligand>
</feature>
<feature type="binding site" evidence="1">
    <location>
        <position position="89"/>
    </location>
    <ligand>
        <name>substrate</name>
    </ligand>
</feature>
<feature type="binding site" evidence="1">
    <location>
        <position position="93"/>
    </location>
    <ligand>
        <name>substrate</name>
    </ligand>
</feature>
<feature type="binding site" evidence="1">
    <location>
        <begin position="121"/>
        <end position="123"/>
    </location>
    <ligand>
        <name>substrate</name>
    </ligand>
</feature>
<feature type="binding site" evidence="1">
    <location>
        <position position="125"/>
    </location>
    <ligand>
        <name>substrate</name>
    </ligand>
</feature>
<feature type="binding site" evidence="1">
    <location>
        <position position="127"/>
    </location>
    <ligand>
        <name>substrate</name>
    </ligand>
</feature>
<feature type="binding site" evidence="1">
    <location>
        <position position="244"/>
    </location>
    <ligand>
        <name>substrate</name>
    </ligand>
</feature>
<feature type="binding site" evidence="1">
    <location>
        <begin position="250"/>
        <end position="252"/>
    </location>
    <ligand>
        <name>substrate</name>
    </ligand>
</feature>
<feature type="binding site" evidence="1">
    <location>
        <position position="263"/>
    </location>
    <ligand>
        <name>Mg(2+)</name>
        <dbReference type="ChEBI" id="CHEBI:18420"/>
    </ligand>
</feature>
<protein>
    <recommendedName>
        <fullName>Decaprenyl diphosphate synthase</fullName>
        <shortName>DecaPP</shortName>
        <ecNumber>2.5.1.86</ecNumber>
        <ecNumber>2.5.1.87</ecNumber>
    </recommendedName>
    <alternativeName>
        <fullName>Decaprenyl pyrophosphate synthase</fullName>
    </alternativeName>
    <alternativeName>
        <fullName>Long-chain isoprenyl diphosphate synthase</fullName>
    </alternativeName>
    <alternativeName>
        <fullName>Trans,polycis-decaprenyl diphosphate synthase</fullName>
    </alternativeName>
</protein>
<reference key="1">
    <citation type="submission" date="1994-03" db="EMBL/GenBank/DDBJ databases">
        <authorList>
            <person name="Smith D.R."/>
            <person name="Robison K."/>
        </authorList>
    </citation>
    <scope>NUCLEOTIDE SEQUENCE [GENOMIC DNA]</scope>
</reference>
<reference key="2">
    <citation type="journal article" date="2001" name="Nature">
        <title>Massive gene decay in the leprosy bacillus.</title>
        <authorList>
            <person name="Cole S.T."/>
            <person name="Eiglmeier K."/>
            <person name="Parkhill J."/>
            <person name="James K.D."/>
            <person name="Thomson N.R."/>
            <person name="Wheeler P.R."/>
            <person name="Honore N."/>
            <person name="Garnier T."/>
            <person name="Churcher C.M."/>
            <person name="Harris D.E."/>
            <person name="Mungall K.L."/>
            <person name="Basham D."/>
            <person name="Brown D."/>
            <person name="Chillingworth T."/>
            <person name="Connor R."/>
            <person name="Davies R.M."/>
            <person name="Devlin K."/>
            <person name="Duthoy S."/>
            <person name="Feltwell T."/>
            <person name="Fraser A."/>
            <person name="Hamlin N."/>
            <person name="Holroyd S."/>
            <person name="Hornsby T."/>
            <person name="Jagels K."/>
            <person name="Lacroix C."/>
            <person name="Maclean J."/>
            <person name="Moule S."/>
            <person name="Murphy L.D."/>
            <person name="Oliver K."/>
            <person name="Quail M.A."/>
            <person name="Rajandream M.A."/>
            <person name="Rutherford K.M."/>
            <person name="Rutter S."/>
            <person name="Seeger K."/>
            <person name="Simon S."/>
            <person name="Simmonds M."/>
            <person name="Skelton J."/>
            <person name="Squares R."/>
            <person name="Squares S."/>
            <person name="Stevens K."/>
            <person name="Taylor K."/>
            <person name="Whitehead S."/>
            <person name="Woodward J.R."/>
            <person name="Barrell B.G."/>
        </authorList>
    </citation>
    <scope>NUCLEOTIDE SEQUENCE [LARGE SCALE GENOMIC DNA]</scope>
    <source>
        <strain>TN</strain>
    </source>
</reference>
<gene>
    <name type="primary">uppS</name>
    <name type="ordered locus">ML0634</name>
    <name type="ORF">B1937_F2_65</name>
</gene>
<comment type="function">
    <text>Catalyzes the sequential condensation of isopentenyl diphosphate (IPP) in the cis configuration with (2Z,6E)-farnesyl diphosphate (Z-FPP or EZ-FPP) generating the 50 carbon product trans,polycis-decaprenyl diphosphate. When (2E,6E)-farnesyl diphosphate (E-FPP or EE-FPP) is used in vitro, both primary products decaprenyl diphosphate and (2E,6E,10E)-geranylgeranyl diphosphate (EEE-GGPP) are synthesized. M.tuberculosis does not synthesize (2E,6E,10Z)-geranylgeranyl diphosphate (EEZ-GGPP) and heptaprenyl diphosphate. Can also accept many different allylic substrates, including E-geranyl diphosphate (E-GPP), neryl diphosphate (NPP), and all-trans-geranyl-geranyl diphosphate.</text>
</comment>
<comment type="catalytic activity">
    <reaction>
        <text>(2Z,6E)-farnesyl diphosphate + 7 isopentenyl diphosphate = (2Z,6Z,10Z,14Z,18Z,22Z,26Z,30Z,34E)-decaprenyl diphosphate + 7 diphosphate</text>
        <dbReference type="Rhea" id="RHEA:47096"/>
        <dbReference type="ChEBI" id="CHEBI:33019"/>
        <dbReference type="ChEBI" id="CHEBI:87356"/>
        <dbReference type="ChEBI" id="CHEBI:128769"/>
        <dbReference type="ChEBI" id="CHEBI:162247"/>
        <dbReference type="EC" id="2.5.1.86"/>
    </reaction>
</comment>
<comment type="catalytic activity">
    <reaction>
        <text>n isopentenyl diphosphate + (2E,6E)-farnesyl diphosphate = a di-trans,poly-cis-polyprenyl diphosphate + n diphosphate</text>
        <dbReference type="Rhea" id="RHEA:53008"/>
        <dbReference type="Rhea" id="RHEA-COMP:19494"/>
        <dbReference type="ChEBI" id="CHEBI:33019"/>
        <dbReference type="ChEBI" id="CHEBI:128769"/>
        <dbReference type="ChEBI" id="CHEBI:136960"/>
        <dbReference type="ChEBI" id="CHEBI:175763"/>
        <dbReference type="EC" id="2.5.1.87"/>
    </reaction>
</comment>
<comment type="cofactor">
    <cofactor evidence="1">
        <name>Mg(2+)</name>
        <dbReference type="ChEBI" id="CHEBI:18420"/>
    </cofactor>
    <text evidence="1">Binds 2 magnesium ions per subunit.</text>
</comment>
<comment type="subunit">
    <text evidence="1">Homodimer.</text>
</comment>
<comment type="subcellular location">
    <subcellularLocation>
        <location evidence="1">Cell membrane</location>
    </subcellularLocation>
</comment>
<comment type="similarity">
    <text evidence="3">Belongs to the UPP synthase family.</text>
</comment>